<organism>
    <name type="scientific">Methanocaldococcus jannaschii (strain ATCC 43067 / DSM 2661 / JAL-1 / JCM 10045 / NBRC 100440)</name>
    <name type="common">Methanococcus jannaschii</name>
    <dbReference type="NCBI Taxonomy" id="243232"/>
    <lineage>
        <taxon>Archaea</taxon>
        <taxon>Methanobacteriati</taxon>
        <taxon>Methanobacteriota</taxon>
        <taxon>Methanomada group</taxon>
        <taxon>Methanococci</taxon>
        <taxon>Methanococcales</taxon>
        <taxon>Methanocaldococcaceae</taxon>
        <taxon>Methanocaldococcus</taxon>
    </lineage>
</organism>
<protein>
    <recommendedName>
        <fullName>Putative protein adenylyltransferase MJ1547</fullName>
        <ecNumber evidence="1">2.7.7.108</ecNumber>
    </recommendedName>
    <alternativeName>
        <fullName>Putative antitoxin MJ1547</fullName>
    </alternativeName>
</protein>
<feature type="chain" id="PRO_0000107401" description="Putative protein adenylyltransferase MJ1547">
    <location>
        <begin position="1"/>
        <end position="122"/>
    </location>
</feature>
<feature type="short sequence motif" description="GSX(10)DXD motif" evidence="2">
    <location>
        <begin position="11"/>
        <end position="25"/>
    </location>
</feature>
<feature type="binding site" evidence="2">
    <location>
        <position position="23"/>
    </location>
    <ligand>
        <name>Mg(2+)</name>
        <dbReference type="ChEBI" id="CHEBI:18420"/>
        <label>1</label>
    </ligand>
</feature>
<feature type="binding site" evidence="2">
    <location>
        <position position="23"/>
    </location>
    <ligand>
        <name>Mg(2+)</name>
        <dbReference type="ChEBI" id="CHEBI:18420"/>
        <label>2</label>
    </ligand>
</feature>
<feature type="binding site" evidence="2">
    <location>
        <position position="25"/>
    </location>
    <ligand>
        <name>Mg(2+)</name>
        <dbReference type="ChEBI" id="CHEBI:18420"/>
        <label>1</label>
    </ligand>
</feature>
<feature type="binding site" evidence="2">
    <location>
        <position position="25"/>
    </location>
    <ligand>
        <name>Mg(2+)</name>
        <dbReference type="ChEBI" id="CHEBI:18420"/>
        <label>2</label>
    </ligand>
</feature>
<feature type="binding site" evidence="2">
    <location>
        <position position="48"/>
    </location>
    <ligand>
        <name>Mg(2+)</name>
        <dbReference type="ChEBI" id="CHEBI:18420"/>
        <label>1</label>
    </ligand>
</feature>
<reference key="1">
    <citation type="journal article" date="1996" name="Science">
        <title>Complete genome sequence of the methanogenic archaeon, Methanococcus jannaschii.</title>
        <authorList>
            <person name="Bult C.J."/>
            <person name="White O."/>
            <person name="Olsen G.J."/>
            <person name="Zhou L."/>
            <person name="Fleischmann R.D."/>
            <person name="Sutton G.G."/>
            <person name="Blake J.A."/>
            <person name="FitzGerald L.M."/>
            <person name="Clayton R.A."/>
            <person name="Gocayne J.D."/>
            <person name="Kerlavage A.R."/>
            <person name="Dougherty B.A."/>
            <person name="Tomb J.-F."/>
            <person name="Adams M.D."/>
            <person name="Reich C.I."/>
            <person name="Overbeek R."/>
            <person name="Kirkness E.F."/>
            <person name="Weinstock K.G."/>
            <person name="Merrick J.M."/>
            <person name="Glodek A."/>
            <person name="Scott J.L."/>
            <person name="Geoghagen N.S.M."/>
            <person name="Weidman J.F."/>
            <person name="Fuhrmann J.L."/>
            <person name="Nguyen D."/>
            <person name="Utterback T.R."/>
            <person name="Kelley J.M."/>
            <person name="Peterson J.D."/>
            <person name="Sadow P.W."/>
            <person name="Hanna M.C."/>
            <person name="Cotton M.D."/>
            <person name="Roberts K.M."/>
            <person name="Hurst M.A."/>
            <person name="Kaine B.P."/>
            <person name="Borodovsky M."/>
            <person name="Klenk H.-P."/>
            <person name="Fraser C.M."/>
            <person name="Smith H.O."/>
            <person name="Woese C.R."/>
            <person name="Venter J.C."/>
        </authorList>
    </citation>
    <scope>NUCLEOTIDE SEQUENCE [LARGE SCALE GENOMIC DNA]</scope>
    <source>
        <strain>ATCC 43067 / DSM 2661 / JAL-1 / JCM 10045 / NBRC 100440</strain>
    </source>
</reference>
<gene>
    <name type="ordered locus">MJ1547</name>
</gene>
<proteinExistence type="inferred from homology"/>
<comment type="function">
    <text evidence="2">Probable antitoxin component of a putative type VII toxin-antitoxin (TA) system. Neutralizes cognate toxic MJ1548 by di-AMPylation.</text>
</comment>
<comment type="catalytic activity">
    <reaction evidence="2">
        <text>L-tyrosyl-[protein] + ATP = O-(5'-adenylyl)-L-tyrosyl-[protein] + diphosphate</text>
        <dbReference type="Rhea" id="RHEA:54288"/>
        <dbReference type="Rhea" id="RHEA-COMP:10136"/>
        <dbReference type="Rhea" id="RHEA-COMP:13846"/>
        <dbReference type="ChEBI" id="CHEBI:30616"/>
        <dbReference type="ChEBI" id="CHEBI:33019"/>
        <dbReference type="ChEBI" id="CHEBI:46858"/>
        <dbReference type="ChEBI" id="CHEBI:83624"/>
        <dbReference type="EC" id="2.7.7.108"/>
    </reaction>
</comment>
<comment type="catalytic activity">
    <reaction evidence="2">
        <text>O-(5'-adenylyl)-L-tyrosyl-[protein] + ATP = O-[5'-(adenylyl-(5'-&gt;3')-adenylyl)]-L-tyrosyl-[protein] + diphosphate</text>
        <dbReference type="Rhea" id="RHEA:66528"/>
        <dbReference type="Rhea" id="RHEA-COMP:13846"/>
        <dbReference type="Rhea" id="RHEA-COMP:17046"/>
        <dbReference type="ChEBI" id="CHEBI:30616"/>
        <dbReference type="ChEBI" id="CHEBI:33019"/>
        <dbReference type="ChEBI" id="CHEBI:83624"/>
        <dbReference type="ChEBI" id="CHEBI:167160"/>
    </reaction>
</comment>
<comment type="cofactor">
    <cofactor evidence="2">
        <name>Mg(2+)</name>
        <dbReference type="ChEBI" id="CHEBI:18420"/>
    </cofactor>
    <text evidence="2">Binds 2 Mg(2+) ions.</text>
</comment>
<comment type="subunit">
    <text evidence="2">Probably forms a complex with cognate toxin MJ1548.</text>
</comment>
<comment type="similarity">
    <text evidence="3">Belongs to the MntA antitoxin family.</text>
</comment>
<dbReference type="EC" id="2.7.7.108" evidence="1"/>
<dbReference type="EMBL" id="L77117">
    <property type="protein sequence ID" value="AAB99565.1"/>
    <property type="molecule type" value="Genomic_DNA"/>
</dbReference>
<dbReference type="PIR" id="B64493">
    <property type="entry name" value="B64493"/>
</dbReference>
<dbReference type="RefSeq" id="WP_010871071.1">
    <property type="nucleotide sequence ID" value="NC_000909.1"/>
</dbReference>
<dbReference type="SMR" id="Q58942"/>
<dbReference type="STRING" id="243232.MJ_1547"/>
<dbReference type="PaxDb" id="243232-MJ_1547"/>
<dbReference type="EnsemblBacteria" id="AAB99565">
    <property type="protein sequence ID" value="AAB99565"/>
    <property type="gene ID" value="MJ_1547"/>
</dbReference>
<dbReference type="GeneID" id="1452455"/>
<dbReference type="KEGG" id="mja:MJ_1547"/>
<dbReference type="eggNOG" id="arCOG02107">
    <property type="taxonomic scope" value="Archaea"/>
</dbReference>
<dbReference type="HOGENOM" id="CLU_154345_0_0_2"/>
<dbReference type="InParanoid" id="Q58942"/>
<dbReference type="OrthoDB" id="61846at2157"/>
<dbReference type="PhylomeDB" id="Q58942"/>
<dbReference type="Proteomes" id="UP000000805">
    <property type="component" value="Chromosome"/>
</dbReference>
<dbReference type="GO" id="GO:0005524">
    <property type="term" value="F:ATP binding"/>
    <property type="evidence" value="ECO:0007669"/>
    <property type="project" value="UniProtKB-KW"/>
</dbReference>
<dbReference type="GO" id="GO:0046872">
    <property type="term" value="F:metal ion binding"/>
    <property type="evidence" value="ECO:0007669"/>
    <property type="project" value="UniProtKB-KW"/>
</dbReference>
<dbReference type="GO" id="GO:0016779">
    <property type="term" value="F:nucleotidyltransferase activity"/>
    <property type="evidence" value="ECO:0007669"/>
    <property type="project" value="UniProtKB-KW"/>
</dbReference>
<dbReference type="CDD" id="cd05403">
    <property type="entry name" value="NT_KNTase_like"/>
    <property type="match status" value="1"/>
</dbReference>
<dbReference type="Gene3D" id="3.30.460.10">
    <property type="entry name" value="Beta Polymerase, domain 2"/>
    <property type="match status" value="1"/>
</dbReference>
<dbReference type="InterPro" id="IPR043519">
    <property type="entry name" value="NT_sf"/>
</dbReference>
<dbReference type="InterPro" id="IPR041633">
    <property type="entry name" value="Polbeta"/>
</dbReference>
<dbReference type="Pfam" id="PF18765">
    <property type="entry name" value="Polbeta"/>
    <property type="match status" value="1"/>
</dbReference>
<dbReference type="SUPFAM" id="SSF81301">
    <property type="entry name" value="Nucleotidyltransferase"/>
    <property type="match status" value="1"/>
</dbReference>
<sequence>MSKVFGILLYGSYAKNEYTKRSDIDICLVGVDRNTYLEILGKLGNKYDIKIFEELPLYIKMEIIKNHKVIFGDELELSEHFYKFRKIWRDMEKRIRENQFNSVREKVMLRRRFNAKKEEILG</sequence>
<evidence type="ECO:0000250" key="1">
    <source>
        <dbReference type="UniProtKB" id="A0A0B0QJN8"/>
    </source>
</evidence>
<evidence type="ECO:0000250" key="2">
    <source>
        <dbReference type="UniProtKB" id="Q8ECH7"/>
    </source>
</evidence>
<evidence type="ECO:0000305" key="3"/>
<accession>Q58942</accession>
<keyword id="KW-0067">ATP-binding</keyword>
<keyword id="KW-0460">Magnesium</keyword>
<keyword id="KW-0479">Metal-binding</keyword>
<keyword id="KW-0547">Nucleotide-binding</keyword>
<keyword id="KW-0548">Nucleotidyltransferase</keyword>
<keyword id="KW-1185">Reference proteome</keyword>
<keyword id="KW-1277">Toxin-antitoxin system</keyword>
<keyword id="KW-0808">Transferase</keyword>
<name>Y1547_METJA</name>